<gene>
    <name evidence="1" type="primary">efp</name>
    <name type="ordered locus">RPB_2956</name>
</gene>
<name>EFP_RHOP2</name>
<protein>
    <recommendedName>
        <fullName evidence="1">Elongation factor P</fullName>
        <shortName evidence="1">EF-P</shortName>
    </recommendedName>
</protein>
<dbReference type="EMBL" id="CP000250">
    <property type="protein sequence ID" value="ABD07658.1"/>
    <property type="molecule type" value="Genomic_DNA"/>
</dbReference>
<dbReference type="RefSeq" id="WP_011441842.1">
    <property type="nucleotide sequence ID" value="NC_007778.1"/>
</dbReference>
<dbReference type="SMR" id="Q2IVV2"/>
<dbReference type="STRING" id="316058.RPB_2956"/>
<dbReference type="KEGG" id="rpb:RPB_2956"/>
<dbReference type="eggNOG" id="COG0231">
    <property type="taxonomic scope" value="Bacteria"/>
</dbReference>
<dbReference type="HOGENOM" id="CLU_074944_1_1_5"/>
<dbReference type="OrthoDB" id="9801844at2"/>
<dbReference type="UniPathway" id="UPA00345"/>
<dbReference type="Proteomes" id="UP000008809">
    <property type="component" value="Chromosome"/>
</dbReference>
<dbReference type="GO" id="GO:0005737">
    <property type="term" value="C:cytoplasm"/>
    <property type="evidence" value="ECO:0007669"/>
    <property type="project" value="UniProtKB-SubCell"/>
</dbReference>
<dbReference type="GO" id="GO:0003746">
    <property type="term" value="F:translation elongation factor activity"/>
    <property type="evidence" value="ECO:0007669"/>
    <property type="project" value="UniProtKB-UniRule"/>
</dbReference>
<dbReference type="GO" id="GO:0043043">
    <property type="term" value="P:peptide biosynthetic process"/>
    <property type="evidence" value="ECO:0007669"/>
    <property type="project" value="InterPro"/>
</dbReference>
<dbReference type="CDD" id="cd04470">
    <property type="entry name" value="S1_EF-P_repeat_1"/>
    <property type="match status" value="1"/>
</dbReference>
<dbReference type="CDD" id="cd05794">
    <property type="entry name" value="S1_EF-P_repeat_2"/>
    <property type="match status" value="1"/>
</dbReference>
<dbReference type="FunFam" id="2.40.50.140:FF:000004">
    <property type="entry name" value="Elongation factor P"/>
    <property type="match status" value="1"/>
</dbReference>
<dbReference type="FunFam" id="2.40.50.140:FF:000009">
    <property type="entry name" value="Elongation factor P"/>
    <property type="match status" value="1"/>
</dbReference>
<dbReference type="Gene3D" id="2.30.30.30">
    <property type="match status" value="1"/>
</dbReference>
<dbReference type="Gene3D" id="2.40.50.140">
    <property type="entry name" value="Nucleic acid-binding proteins"/>
    <property type="match status" value="2"/>
</dbReference>
<dbReference type="HAMAP" id="MF_00141">
    <property type="entry name" value="EF_P"/>
    <property type="match status" value="1"/>
</dbReference>
<dbReference type="InterPro" id="IPR015365">
    <property type="entry name" value="Elong-fact-P_C"/>
</dbReference>
<dbReference type="InterPro" id="IPR012340">
    <property type="entry name" value="NA-bd_OB-fold"/>
</dbReference>
<dbReference type="InterPro" id="IPR014722">
    <property type="entry name" value="Rib_uL2_dom2"/>
</dbReference>
<dbReference type="InterPro" id="IPR020599">
    <property type="entry name" value="Transl_elong_fac_P/YeiP"/>
</dbReference>
<dbReference type="InterPro" id="IPR013185">
    <property type="entry name" value="Transl_elong_KOW-like"/>
</dbReference>
<dbReference type="InterPro" id="IPR001059">
    <property type="entry name" value="Transl_elong_P/YeiP_cen"/>
</dbReference>
<dbReference type="InterPro" id="IPR013852">
    <property type="entry name" value="Transl_elong_P/YeiP_CS"/>
</dbReference>
<dbReference type="InterPro" id="IPR011768">
    <property type="entry name" value="Transl_elongation_fac_P"/>
</dbReference>
<dbReference type="InterPro" id="IPR008991">
    <property type="entry name" value="Translation_prot_SH3-like_sf"/>
</dbReference>
<dbReference type="NCBIfam" id="TIGR00038">
    <property type="entry name" value="efp"/>
    <property type="match status" value="1"/>
</dbReference>
<dbReference type="NCBIfam" id="NF001810">
    <property type="entry name" value="PRK00529.1"/>
    <property type="match status" value="1"/>
</dbReference>
<dbReference type="PANTHER" id="PTHR30053">
    <property type="entry name" value="ELONGATION FACTOR P"/>
    <property type="match status" value="1"/>
</dbReference>
<dbReference type="PANTHER" id="PTHR30053:SF14">
    <property type="entry name" value="TRANSLATION ELONGATION FACTOR KOW-LIKE DOMAIN-CONTAINING PROTEIN"/>
    <property type="match status" value="1"/>
</dbReference>
<dbReference type="Pfam" id="PF01132">
    <property type="entry name" value="EFP"/>
    <property type="match status" value="1"/>
</dbReference>
<dbReference type="Pfam" id="PF08207">
    <property type="entry name" value="EFP_N"/>
    <property type="match status" value="1"/>
</dbReference>
<dbReference type="Pfam" id="PF09285">
    <property type="entry name" value="Elong-fact-P_C"/>
    <property type="match status" value="1"/>
</dbReference>
<dbReference type="PIRSF" id="PIRSF005901">
    <property type="entry name" value="EF-P"/>
    <property type="match status" value="1"/>
</dbReference>
<dbReference type="SMART" id="SM01185">
    <property type="entry name" value="EFP"/>
    <property type="match status" value="1"/>
</dbReference>
<dbReference type="SMART" id="SM00841">
    <property type="entry name" value="Elong-fact-P_C"/>
    <property type="match status" value="1"/>
</dbReference>
<dbReference type="SUPFAM" id="SSF50249">
    <property type="entry name" value="Nucleic acid-binding proteins"/>
    <property type="match status" value="2"/>
</dbReference>
<dbReference type="SUPFAM" id="SSF50104">
    <property type="entry name" value="Translation proteins SH3-like domain"/>
    <property type="match status" value="1"/>
</dbReference>
<dbReference type="PROSITE" id="PS01275">
    <property type="entry name" value="EFP"/>
    <property type="match status" value="1"/>
</dbReference>
<feature type="chain" id="PRO_1000010829" description="Elongation factor P">
    <location>
        <begin position="1"/>
        <end position="188"/>
    </location>
</feature>
<sequence>MRVIASSIRKGNVLEQDGKLYVVLSAENIHPGKGTPVSQIEMRRISDGVKISERYKTTDQVEKATIEERNYSFLYEDGEGFHFMEPESFDQVQVTKDVVGNSAPYLQEGMVVKLSMHDTVAVAITLPQRATLEVVETEPVTKGQTASSSYKPAVLSNGVRTAVPPHVGVGTRIVVLTEDGSYVERAKD</sequence>
<reference key="1">
    <citation type="submission" date="2006-01" db="EMBL/GenBank/DDBJ databases">
        <title>Complete sequence of Rhodopseudomonas palustris HaA2.</title>
        <authorList>
            <consortium name="US DOE Joint Genome Institute"/>
            <person name="Copeland A."/>
            <person name="Lucas S."/>
            <person name="Lapidus A."/>
            <person name="Barry K."/>
            <person name="Detter J.C."/>
            <person name="Glavina T."/>
            <person name="Hammon N."/>
            <person name="Israni S."/>
            <person name="Pitluck S."/>
            <person name="Chain P."/>
            <person name="Malfatti S."/>
            <person name="Shin M."/>
            <person name="Vergez L."/>
            <person name="Schmutz J."/>
            <person name="Larimer F."/>
            <person name="Land M."/>
            <person name="Hauser L."/>
            <person name="Pelletier D.A."/>
            <person name="Kyrpides N."/>
            <person name="Anderson I."/>
            <person name="Oda Y."/>
            <person name="Harwood C.S."/>
            <person name="Richardson P."/>
        </authorList>
    </citation>
    <scope>NUCLEOTIDE SEQUENCE [LARGE SCALE GENOMIC DNA]</scope>
    <source>
        <strain>HaA2</strain>
    </source>
</reference>
<evidence type="ECO:0000255" key="1">
    <source>
        <dbReference type="HAMAP-Rule" id="MF_00141"/>
    </source>
</evidence>
<keyword id="KW-0963">Cytoplasm</keyword>
<keyword id="KW-0251">Elongation factor</keyword>
<keyword id="KW-0648">Protein biosynthesis</keyword>
<keyword id="KW-1185">Reference proteome</keyword>
<proteinExistence type="inferred from homology"/>
<accession>Q2IVV2</accession>
<organism>
    <name type="scientific">Rhodopseudomonas palustris (strain HaA2)</name>
    <dbReference type="NCBI Taxonomy" id="316058"/>
    <lineage>
        <taxon>Bacteria</taxon>
        <taxon>Pseudomonadati</taxon>
        <taxon>Pseudomonadota</taxon>
        <taxon>Alphaproteobacteria</taxon>
        <taxon>Hyphomicrobiales</taxon>
        <taxon>Nitrobacteraceae</taxon>
        <taxon>Rhodopseudomonas</taxon>
    </lineage>
</organism>
<comment type="function">
    <text evidence="1">Involved in peptide bond synthesis. Stimulates efficient translation and peptide-bond synthesis on native or reconstituted 70S ribosomes in vitro. Probably functions indirectly by altering the affinity of the ribosome for aminoacyl-tRNA, thus increasing their reactivity as acceptors for peptidyl transferase.</text>
</comment>
<comment type="pathway">
    <text evidence="1">Protein biosynthesis; polypeptide chain elongation.</text>
</comment>
<comment type="subcellular location">
    <subcellularLocation>
        <location evidence="1">Cytoplasm</location>
    </subcellularLocation>
</comment>
<comment type="similarity">
    <text evidence="1">Belongs to the elongation factor P family.</text>
</comment>